<sequence length="355" mass="38661">MKLSTRVTGLLNVKYPIIQAGMAGSTTPELVATVSNAGGLGTIGAGYFSSDRLEQEITYLQELTDLPYAVNLFVPSDKLYIPEKVEHMNAWLKPYRRAFNIEEPVINMTEKQQFKDAIDLVIEKGVPAVSFTFGIPEQTVIEKLKERHIKLIGTATSVEEAIANESAGMDMVIAQGSEAGGHRGAFSETASQLTPLIGTMSLVPQMVDQINIPVVAAGGIMDGRGLVASMVLGAEGVQMGTAFLTSDESGASQLYKHAISQSKETDTVVTNVITGKPARGIENEFIHKMNEYDDEIPDYPIQNQLTNALRKEAANKGNAQWTHLWSGQSPRLVQHMSAWALIENVVKQANEIMNR</sequence>
<protein>
    <recommendedName>
        <fullName>Probable nitronate monooxygenase</fullName>
        <shortName>NMO</shortName>
        <ecNumber evidence="2">1.13.12.-</ecNumber>
    </recommendedName>
    <alternativeName>
        <fullName>Propionate 3-nitronate monooxygenase</fullName>
        <shortName>P3N monooxygenase</shortName>
    </alternativeName>
</protein>
<evidence type="ECO:0000250" key="1">
    <source>
        <dbReference type="UniProtKB" id="D0V3Y4"/>
    </source>
</evidence>
<evidence type="ECO:0000250" key="2">
    <source>
        <dbReference type="UniProtKB" id="Q9HWH9"/>
    </source>
</evidence>
<evidence type="ECO:0000305" key="3"/>
<name>NMO_STAS1</name>
<dbReference type="EC" id="1.13.12.-" evidence="2"/>
<dbReference type="EMBL" id="AP008934">
    <property type="protein sequence ID" value="BAE18999.1"/>
    <property type="molecule type" value="Genomic_DNA"/>
</dbReference>
<dbReference type="RefSeq" id="WP_011303536.1">
    <property type="nucleotide sequence ID" value="NZ_MTGA01000039.1"/>
</dbReference>
<dbReference type="SMR" id="Q49W60"/>
<dbReference type="GeneID" id="3615515"/>
<dbReference type="KEGG" id="ssp:SSP1854"/>
<dbReference type="PATRIC" id="fig|342451.11.peg.1850"/>
<dbReference type="eggNOG" id="COG2070">
    <property type="taxonomic scope" value="Bacteria"/>
</dbReference>
<dbReference type="HOGENOM" id="CLU_038732_5_1_9"/>
<dbReference type="OrthoDB" id="9778912at2"/>
<dbReference type="Proteomes" id="UP000006371">
    <property type="component" value="Chromosome"/>
</dbReference>
<dbReference type="GO" id="GO:0018580">
    <property type="term" value="F:nitronate monooxygenase activity"/>
    <property type="evidence" value="ECO:0007669"/>
    <property type="project" value="InterPro"/>
</dbReference>
<dbReference type="GO" id="GO:0000166">
    <property type="term" value="F:nucleotide binding"/>
    <property type="evidence" value="ECO:0007669"/>
    <property type="project" value="UniProtKB-KW"/>
</dbReference>
<dbReference type="GO" id="GO:0009636">
    <property type="term" value="P:response to toxic substance"/>
    <property type="evidence" value="ECO:0007669"/>
    <property type="project" value="UniProtKB-KW"/>
</dbReference>
<dbReference type="CDD" id="cd04730">
    <property type="entry name" value="NPD_like"/>
    <property type="match status" value="1"/>
</dbReference>
<dbReference type="FunFam" id="3.20.20.70:FF:000154">
    <property type="entry name" value="Probable nitronate monooxygenase"/>
    <property type="match status" value="1"/>
</dbReference>
<dbReference type="Gene3D" id="3.20.20.70">
    <property type="entry name" value="Aldolase class I"/>
    <property type="match status" value="1"/>
</dbReference>
<dbReference type="InterPro" id="IPR013785">
    <property type="entry name" value="Aldolase_TIM"/>
</dbReference>
<dbReference type="InterPro" id="IPR004136">
    <property type="entry name" value="NMO"/>
</dbReference>
<dbReference type="PANTHER" id="PTHR42747">
    <property type="entry name" value="NITRONATE MONOOXYGENASE-RELATED"/>
    <property type="match status" value="1"/>
</dbReference>
<dbReference type="PANTHER" id="PTHR42747:SF3">
    <property type="entry name" value="NITRONATE MONOOXYGENASE-RELATED"/>
    <property type="match status" value="1"/>
</dbReference>
<dbReference type="Pfam" id="PF03060">
    <property type="entry name" value="NMO"/>
    <property type="match status" value="1"/>
</dbReference>
<dbReference type="SUPFAM" id="SSF51412">
    <property type="entry name" value="Inosine monophosphate dehydrogenase (IMPDH)"/>
    <property type="match status" value="1"/>
</dbReference>
<keyword id="KW-0216">Detoxification</keyword>
<keyword id="KW-0285">Flavoprotein</keyword>
<keyword id="KW-0288">FMN</keyword>
<keyword id="KW-0503">Monooxygenase</keyword>
<keyword id="KW-0547">Nucleotide-binding</keyword>
<keyword id="KW-0560">Oxidoreductase</keyword>
<keyword id="KW-1185">Reference proteome</keyword>
<reference key="1">
    <citation type="journal article" date="2005" name="Proc. Natl. Acad. Sci. U.S.A.">
        <title>Whole genome sequence of Staphylococcus saprophyticus reveals the pathogenesis of uncomplicated urinary tract infection.</title>
        <authorList>
            <person name="Kuroda M."/>
            <person name="Yamashita A."/>
            <person name="Hirakawa H."/>
            <person name="Kumano M."/>
            <person name="Morikawa K."/>
            <person name="Higashide M."/>
            <person name="Maruyama A."/>
            <person name="Inose Y."/>
            <person name="Matoba K."/>
            <person name="Toh H."/>
            <person name="Kuhara S."/>
            <person name="Hattori M."/>
            <person name="Ohta T."/>
        </authorList>
    </citation>
    <scope>NUCLEOTIDE SEQUENCE [LARGE SCALE GENOMIC DNA]</scope>
    <source>
        <strain>ATCC 15305 / DSM 20229 / NCIMB 8711 / NCTC 7292 / S-41</strain>
    </source>
</reference>
<organism>
    <name type="scientific">Staphylococcus saprophyticus subsp. saprophyticus (strain ATCC 15305 / DSM 20229 / NCIMB 8711 / NCTC 7292 / S-41)</name>
    <dbReference type="NCBI Taxonomy" id="342451"/>
    <lineage>
        <taxon>Bacteria</taxon>
        <taxon>Bacillati</taxon>
        <taxon>Bacillota</taxon>
        <taxon>Bacilli</taxon>
        <taxon>Bacillales</taxon>
        <taxon>Staphylococcaceae</taxon>
        <taxon>Staphylococcus</taxon>
    </lineage>
</organism>
<proteinExistence type="inferred from homology"/>
<feature type="chain" id="PRO_0000360903" description="Probable nitronate monooxygenase">
    <location>
        <begin position="1"/>
        <end position="355"/>
    </location>
</feature>
<feature type="binding site" evidence="2">
    <location>
        <position position="71"/>
    </location>
    <ligand>
        <name>FMN</name>
        <dbReference type="ChEBI" id="CHEBI:58210"/>
    </ligand>
</feature>
<feature type="binding site" evidence="2">
    <location>
        <position position="175"/>
    </location>
    <ligand>
        <name>FMN</name>
        <dbReference type="ChEBI" id="CHEBI:58210"/>
    </ligand>
</feature>
<feature type="binding site" evidence="2">
    <location>
        <position position="180"/>
    </location>
    <ligand>
        <name>FMN</name>
        <dbReference type="ChEBI" id="CHEBI:58210"/>
    </ligand>
</feature>
<feature type="binding site" evidence="2">
    <location>
        <position position="219"/>
    </location>
    <ligand>
        <name>FMN</name>
        <dbReference type="ChEBI" id="CHEBI:58210"/>
    </ligand>
</feature>
<feature type="binding site" evidence="2">
    <location>
        <begin position="238"/>
        <end position="241"/>
    </location>
    <ligand>
        <name>FMN</name>
        <dbReference type="ChEBI" id="CHEBI:58210"/>
    </ligand>
</feature>
<comment type="function">
    <text evidence="2">Nitronate monooxygenase that uses molecular oxygen to catalyze the oxidative denitrification of alkyl nitronates. Acts on propionate 3-nitronate (P3N), the presumed physiological substrate. Probably functions in the detoxification of P3N, a metabolic poison produced by plants and fungi as a defense mechanism.</text>
</comment>
<comment type="catalytic activity">
    <reaction evidence="1">
        <text>3 propionate 3-nitronate + 3 O2 + H2O = 3 3-oxopropanoate + 2 nitrate + nitrite + H2O2 + 3 H(+)</text>
        <dbReference type="Rhea" id="RHEA:57332"/>
        <dbReference type="ChEBI" id="CHEBI:15377"/>
        <dbReference type="ChEBI" id="CHEBI:15378"/>
        <dbReference type="ChEBI" id="CHEBI:15379"/>
        <dbReference type="ChEBI" id="CHEBI:16240"/>
        <dbReference type="ChEBI" id="CHEBI:16301"/>
        <dbReference type="ChEBI" id="CHEBI:17632"/>
        <dbReference type="ChEBI" id="CHEBI:33190"/>
        <dbReference type="ChEBI" id="CHEBI:136067"/>
    </reaction>
</comment>
<comment type="cofactor">
    <cofactor evidence="2">
        <name>FMN</name>
        <dbReference type="ChEBI" id="CHEBI:58210"/>
    </cofactor>
    <text evidence="2">Binds 1 FMN per subunit.</text>
</comment>
<comment type="miscellaneous">
    <text evidence="3">P3N is a potent irreversible inhibitor of the key enzyme succinate dehydrogenase in the Krebs cycle and electron transport chain. P3N has been shown to be a toxic metabolite to bacteria, plants, fungi, mammals or any organism that uses succinate dehydrogenase.</text>
</comment>
<comment type="similarity">
    <text evidence="3">Belongs to the nitronate monooxygenase family. NMO class I subfamily.</text>
</comment>
<gene>
    <name type="ordered locus">SSP1854</name>
</gene>
<accession>Q49W60</accession>